<reference key="1">
    <citation type="journal article" date="2000" name="J. Cell Sci.">
        <title>Preferential association of syntaxin 8 with the early endosome.</title>
        <authorList>
            <person name="Subramaniam V.N."/>
            <person name="Loh E."/>
            <person name="Horstmann H."/>
            <person name="Habermann A."/>
            <person name="Xu Y."/>
            <person name="Coe J."/>
            <person name="Griffiths G."/>
            <person name="Hong W."/>
        </authorList>
    </citation>
    <scope>NUCLEOTIDE SEQUENCE [MRNA]</scope>
    <source>
        <tissue>Brain</tissue>
    </source>
</reference>
<reference key="2">
    <citation type="journal article" date="2000" name="EMBO J.">
        <title>A SNARE complex mediating fusion of late endosomes defines conserved properties of SNARE structure and function.</title>
        <authorList>
            <person name="Antonin W."/>
            <person name="Holroyd C."/>
            <person name="Fasshauer D."/>
            <person name="Pabst S."/>
            <person name="Fischer von Mollard G."/>
            <person name="Jahn R."/>
        </authorList>
    </citation>
    <scope>SNARE COMPLEX CHARACTERIZATION</scope>
</reference>
<reference key="3">
    <citation type="journal article" date="2012" name="Nat. Commun.">
        <title>Quantitative maps of protein phosphorylation sites across 14 different rat organs and tissues.</title>
        <authorList>
            <person name="Lundby A."/>
            <person name="Secher A."/>
            <person name="Lage K."/>
            <person name="Nordsborg N.B."/>
            <person name="Dmytriyev A."/>
            <person name="Lundby C."/>
            <person name="Olsen J.V."/>
        </authorList>
    </citation>
    <scope>PHOSPHORYLATION [LARGE SCALE ANALYSIS] AT SER-102</scope>
    <scope>IDENTIFICATION BY MASS SPECTROMETRY [LARGE SCALE ANALYSIS]</scope>
</reference>
<reference key="4">
    <citation type="journal article" date="2002" name="Nat. Struct. Biol.">
        <title>Crystal structure of the endosomal SNARE complex reveals common structural principles of all SNAREs.</title>
        <authorList>
            <person name="Antonin W."/>
            <person name="Fasshauer D."/>
            <person name="Becker S."/>
            <person name="Jahn R."/>
            <person name="Schneider T.R."/>
        </authorList>
    </citation>
    <scope>X-RAY CRYSTALLOGRAPHY (1.9 ANGSTROMS) OF 149-209 IN COMPLEX WITH STX7; VAMP8 AND VTI1B</scope>
    <scope>INTERACTION WITH VAMP8</scope>
</reference>
<reference key="5">
    <citation type="journal article" date="2004" name="EMBO Rep.">
        <title>Combinatorial SNARE complexes with VAMP7 or VAMP8 define different late endocytic fusion events.</title>
        <authorList>
            <person name="Pryor P.R."/>
            <person name="Mullock B.M."/>
            <person name="Bright N.A."/>
            <person name="Lindsay M.R."/>
            <person name="Gray S.R."/>
            <person name="Richardson S.C.W."/>
            <person name="Stewart A."/>
            <person name="James D.E."/>
            <person name="Piper R.C."/>
            <person name="Luzio J.P."/>
        </authorList>
    </citation>
    <scope>SNARE COMPLEX CHARACTERIZATION</scope>
</reference>
<keyword id="KW-0002">3D-structure</keyword>
<keyword id="KW-0175">Coiled coil</keyword>
<keyword id="KW-0472">Membrane</keyword>
<keyword id="KW-0597">Phosphoprotein</keyword>
<keyword id="KW-1185">Reference proteome</keyword>
<keyword id="KW-0812">Transmembrane</keyword>
<keyword id="KW-1133">Transmembrane helix</keyword>
<keyword id="KW-0813">Transport</keyword>
<keyword id="KW-0832">Ubl conjugation</keyword>
<comment type="function">
    <text>Vesicle trafficking protein that functions in the early secretory pathway, possibly by mediating retrograde transport from cis-Golgi membranes to the ER.</text>
</comment>
<comment type="subunit">
    <text evidence="1 2">Part of the SNARE core complex containing STX7, VAMP8 and VTI1B. Interacts with VAMP8. Forms a SNARE complex with STX7, VTI1B and VAMP8 which functions in the homotypic fusion of late endosomes. Component of the SNARE complex composed of STX7, STX8, VAMP7 and VTI1B that is required for heterotypic fusion of late endosomes with lysosomes. Interacts with HECTD3 (By similarity). Interacts with TPC1 (By similarity).</text>
</comment>
<comment type="subcellular location">
    <subcellularLocation>
        <location>Membrane</location>
        <topology>Single-pass type IV membrane protein</topology>
    </subcellularLocation>
    <text>Preferentially associated with the early endosome. To a lesser extent, also present in late endosome, the plasma membrane and coated pits.</text>
</comment>
<comment type="tissue specificity">
    <text>Widely expressed in all tissues examined.</text>
</comment>
<comment type="PTM">
    <text evidence="1">Ubiquitinated by HECTD3.</text>
</comment>
<comment type="similarity">
    <text evidence="5">Belongs to the syntaxin family.</text>
</comment>
<sequence>MAPDPWFSTYDSTCQIAQEIAEKIQERNQCERRGEKTPKLTLTIRTLLKNLKVKIDLLKDLLLRAVSTRQITQLEGDRRQNLLDDLVTRERLLLASFKNEGSEPDLIRSSLMSEEAKRGTPNPWLCEEPEETRGLGFDEIRQQQQKIIQEQDAGLDALSSIISRQKQMGQEIGNELDEQNEIIDDLANLVENTDEKLRTEARRVTLVDRKSASCGMIMVILLLLVAIVVVAVWPTN</sequence>
<protein>
    <recommendedName>
        <fullName>Syntaxin-8</fullName>
    </recommendedName>
</protein>
<feature type="chain" id="PRO_0000210219" description="Syntaxin-8">
    <location>
        <begin position="1"/>
        <end position="236"/>
    </location>
</feature>
<feature type="topological domain" description="Cytoplasmic" evidence="3">
    <location>
        <begin position="1"/>
        <end position="215"/>
    </location>
</feature>
<feature type="transmembrane region" description="Helical; Anchor for type IV membrane protein" evidence="3">
    <location>
        <begin position="216"/>
        <end position="232"/>
    </location>
</feature>
<feature type="topological domain" description="Vesicular" evidence="3">
    <location>
        <begin position="233"/>
        <end position="236"/>
    </location>
</feature>
<feature type="domain" description="t-SNARE coiled-coil homology" evidence="4">
    <location>
        <begin position="145"/>
        <end position="207"/>
    </location>
</feature>
<feature type="coiled-coil region" evidence="1">
    <location>
        <begin position="42"/>
        <end position="65"/>
    </location>
</feature>
<feature type="modified residue" description="Phosphoserine" evidence="6">
    <location>
        <position position="102"/>
    </location>
</feature>
<feature type="modified residue" description="Phosphoserine" evidence="2">
    <location>
        <position position="160"/>
    </location>
</feature>
<feature type="helix" evidence="7">
    <location>
        <begin position="153"/>
        <end position="204"/>
    </location>
</feature>
<organism>
    <name type="scientific">Rattus norvegicus</name>
    <name type="common">Rat</name>
    <dbReference type="NCBI Taxonomy" id="10116"/>
    <lineage>
        <taxon>Eukaryota</taxon>
        <taxon>Metazoa</taxon>
        <taxon>Chordata</taxon>
        <taxon>Craniata</taxon>
        <taxon>Vertebrata</taxon>
        <taxon>Euteleostomi</taxon>
        <taxon>Mammalia</taxon>
        <taxon>Eutheria</taxon>
        <taxon>Euarchontoglires</taxon>
        <taxon>Glires</taxon>
        <taxon>Rodentia</taxon>
        <taxon>Myomorpha</taxon>
        <taxon>Muroidea</taxon>
        <taxon>Muridae</taxon>
        <taxon>Murinae</taxon>
        <taxon>Rattus</taxon>
    </lineage>
</organism>
<evidence type="ECO:0000250" key="1"/>
<evidence type="ECO:0000250" key="2">
    <source>
        <dbReference type="UniProtKB" id="O88983"/>
    </source>
</evidence>
<evidence type="ECO:0000255" key="3"/>
<evidence type="ECO:0000255" key="4">
    <source>
        <dbReference type="PROSITE-ProRule" id="PRU00202"/>
    </source>
</evidence>
<evidence type="ECO:0000305" key="5"/>
<evidence type="ECO:0007744" key="6">
    <source>
    </source>
</evidence>
<evidence type="ECO:0007829" key="7">
    <source>
        <dbReference type="PDB" id="1GL2"/>
    </source>
</evidence>
<proteinExistence type="evidence at protein level"/>
<name>STX8_RAT</name>
<accession>Q9Z2Q7</accession>
<dbReference type="EMBL" id="AF033109">
    <property type="protein sequence ID" value="AAC70903.1"/>
    <property type="molecule type" value="mRNA"/>
</dbReference>
<dbReference type="RefSeq" id="NP_113844.1">
    <property type="nucleotide sequence ID" value="NM_031656.2"/>
</dbReference>
<dbReference type="PDB" id="1GL2">
    <property type="method" value="X-ray"/>
    <property type="resolution" value="1.90 A"/>
    <property type="chains" value="D=149-209"/>
</dbReference>
<dbReference type="PDBsum" id="1GL2"/>
<dbReference type="SMR" id="Q9Z2Q7"/>
<dbReference type="BioGRID" id="248716">
    <property type="interactions" value="3"/>
</dbReference>
<dbReference type="CORUM" id="Q9Z2Q7"/>
<dbReference type="DIP" id="DIP-59284N"/>
<dbReference type="FunCoup" id="Q9Z2Q7">
    <property type="interactions" value="2179"/>
</dbReference>
<dbReference type="IntAct" id="Q9Z2Q7">
    <property type="interactions" value="1"/>
</dbReference>
<dbReference type="STRING" id="10116.ENSRNOP00000005204"/>
<dbReference type="iPTMnet" id="Q9Z2Q7"/>
<dbReference type="PhosphoSitePlus" id="Q9Z2Q7"/>
<dbReference type="SwissPalm" id="Q9Z2Q7"/>
<dbReference type="PaxDb" id="10116-ENSRNOP00000005204"/>
<dbReference type="GeneID" id="59074"/>
<dbReference type="KEGG" id="rno:59074"/>
<dbReference type="UCSC" id="RGD:61917">
    <property type="organism name" value="rat"/>
</dbReference>
<dbReference type="AGR" id="RGD:61917"/>
<dbReference type="CTD" id="9482"/>
<dbReference type="RGD" id="61917">
    <property type="gene designation" value="Stx8"/>
</dbReference>
<dbReference type="VEuPathDB" id="HostDB:ENSRNOG00000003849"/>
<dbReference type="eggNOG" id="KOG3202">
    <property type="taxonomic scope" value="Eukaryota"/>
</dbReference>
<dbReference type="HOGENOM" id="CLU_099972_1_0_1"/>
<dbReference type="InParanoid" id="Q9Z2Q7"/>
<dbReference type="PhylomeDB" id="Q9Z2Q7"/>
<dbReference type="TreeFam" id="TF323262"/>
<dbReference type="EvolutionaryTrace" id="Q9Z2Q7"/>
<dbReference type="PRO" id="PR:Q9Z2Q7"/>
<dbReference type="Proteomes" id="UP000002494">
    <property type="component" value="Chromosome 10"/>
</dbReference>
<dbReference type="Bgee" id="ENSRNOG00000003849">
    <property type="expression patterns" value="Expressed in stomach and 20 other cell types or tissues"/>
</dbReference>
<dbReference type="GO" id="GO:0005769">
    <property type="term" value="C:early endosome"/>
    <property type="evidence" value="ECO:0000266"/>
    <property type="project" value="RGD"/>
</dbReference>
<dbReference type="GO" id="GO:0012505">
    <property type="term" value="C:endomembrane system"/>
    <property type="evidence" value="ECO:0000318"/>
    <property type="project" value="GO_Central"/>
</dbReference>
<dbReference type="GO" id="GO:0005768">
    <property type="term" value="C:endosome"/>
    <property type="evidence" value="ECO:0000266"/>
    <property type="project" value="RGD"/>
</dbReference>
<dbReference type="GO" id="GO:0005770">
    <property type="term" value="C:late endosome"/>
    <property type="evidence" value="ECO:0000266"/>
    <property type="project" value="RGD"/>
</dbReference>
<dbReference type="GO" id="GO:0031902">
    <property type="term" value="C:late endosome membrane"/>
    <property type="evidence" value="ECO:0000314"/>
    <property type="project" value="RGD"/>
</dbReference>
<dbReference type="GO" id="GO:0005765">
    <property type="term" value="C:lysosomal membrane"/>
    <property type="evidence" value="ECO:0000314"/>
    <property type="project" value="RGD"/>
</dbReference>
<dbReference type="GO" id="GO:0048471">
    <property type="term" value="C:perinuclear region of cytoplasm"/>
    <property type="evidence" value="ECO:0000266"/>
    <property type="project" value="RGD"/>
</dbReference>
<dbReference type="GO" id="GO:0045335">
    <property type="term" value="C:phagocytic vesicle"/>
    <property type="evidence" value="ECO:0000266"/>
    <property type="project" value="RGD"/>
</dbReference>
<dbReference type="GO" id="GO:0055037">
    <property type="term" value="C:recycling endosome"/>
    <property type="evidence" value="ECO:0000266"/>
    <property type="project" value="RGD"/>
</dbReference>
<dbReference type="GO" id="GO:0031201">
    <property type="term" value="C:SNARE complex"/>
    <property type="evidence" value="ECO:0000314"/>
    <property type="project" value="UniProtKB"/>
</dbReference>
<dbReference type="GO" id="GO:0005802">
    <property type="term" value="C:trans-Golgi network"/>
    <property type="evidence" value="ECO:0000266"/>
    <property type="project" value="RGD"/>
</dbReference>
<dbReference type="GO" id="GO:0031982">
    <property type="term" value="C:vesicle"/>
    <property type="evidence" value="ECO:0000266"/>
    <property type="project" value="RGD"/>
</dbReference>
<dbReference type="GO" id="GO:0019869">
    <property type="term" value="F:chloride channel inhibitor activity"/>
    <property type="evidence" value="ECO:0000266"/>
    <property type="project" value="RGD"/>
</dbReference>
<dbReference type="GO" id="GO:0005484">
    <property type="term" value="F:SNAP receptor activity"/>
    <property type="evidence" value="ECO:0000318"/>
    <property type="project" value="GO_Central"/>
</dbReference>
<dbReference type="GO" id="GO:0000149">
    <property type="term" value="F:SNARE binding"/>
    <property type="evidence" value="ECO:0000318"/>
    <property type="project" value="GO_Central"/>
</dbReference>
<dbReference type="GO" id="GO:0019905">
    <property type="term" value="F:syntaxin binding"/>
    <property type="evidence" value="ECO:0000266"/>
    <property type="project" value="RGD"/>
</dbReference>
<dbReference type="GO" id="GO:0031625">
    <property type="term" value="F:ubiquitin protein ligase binding"/>
    <property type="evidence" value="ECO:0000266"/>
    <property type="project" value="RGD"/>
</dbReference>
<dbReference type="GO" id="GO:0071346">
    <property type="term" value="P:cellular response to type II interferon"/>
    <property type="evidence" value="ECO:0000266"/>
    <property type="project" value="RGD"/>
</dbReference>
<dbReference type="GO" id="GO:0045022">
    <property type="term" value="P:early endosome to late endosome transport"/>
    <property type="evidence" value="ECO:0000266"/>
    <property type="project" value="RGD"/>
</dbReference>
<dbReference type="GO" id="GO:0008333">
    <property type="term" value="P:endosome to lysosome transport"/>
    <property type="evidence" value="ECO:0000314"/>
    <property type="project" value="RGD"/>
</dbReference>
<dbReference type="GO" id="GO:0006886">
    <property type="term" value="P:intracellular protein transport"/>
    <property type="evidence" value="ECO:0000318"/>
    <property type="project" value="GO_Central"/>
</dbReference>
<dbReference type="GO" id="GO:1903076">
    <property type="term" value="P:regulation of protein localization to plasma membrane"/>
    <property type="evidence" value="ECO:0000266"/>
    <property type="project" value="RGD"/>
</dbReference>
<dbReference type="GO" id="GO:0048278">
    <property type="term" value="P:vesicle docking"/>
    <property type="evidence" value="ECO:0000318"/>
    <property type="project" value="GO_Central"/>
</dbReference>
<dbReference type="GO" id="GO:0006906">
    <property type="term" value="P:vesicle fusion"/>
    <property type="evidence" value="ECO:0000314"/>
    <property type="project" value="RGD"/>
</dbReference>
<dbReference type="GO" id="GO:0016192">
    <property type="term" value="P:vesicle-mediated transport"/>
    <property type="evidence" value="ECO:0000314"/>
    <property type="project" value="RGD"/>
</dbReference>
<dbReference type="CDD" id="cd15852">
    <property type="entry name" value="SNARE_Syntaxin8"/>
    <property type="match status" value="1"/>
</dbReference>
<dbReference type="FunFam" id="1.20.5.110:FF:000036">
    <property type="entry name" value="Putative Syntaxin-8"/>
    <property type="match status" value="1"/>
</dbReference>
<dbReference type="Gene3D" id="1.20.5.110">
    <property type="match status" value="1"/>
</dbReference>
<dbReference type="InterPro" id="IPR045242">
    <property type="entry name" value="Syntaxin"/>
</dbReference>
<dbReference type="InterPro" id="IPR041875">
    <property type="entry name" value="Syntaxin-8_SNARE"/>
</dbReference>
<dbReference type="InterPro" id="IPR000727">
    <property type="entry name" value="T_SNARE_dom"/>
</dbReference>
<dbReference type="PANTHER" id="PTHR19957">
    <property type="entry name" value="SYNTAXIN"/>
    <property type="match status" value="1"/>
</dbReference>
<dbReference type="PANTHER" id="PTHR19957:SF124">
    <property type="entry name" value="SYNTAXIN-8"/>
    <property type="match status" value="1"/>
</dbReference>
<dbReference type="Pfam" id="PF05739">
    <property type="entry name" value="SNARE"/>
    <property type="match status" value="1"/>
</dbReference>
<dbReference type="SMART" id="SM00397">
    <property type="entry name" value="t_SNARE"/>
    <property type="match status" value="1"/>
</dbReference>
<dbReference type="SUPFAM" id="SSF58038">
    <property type="entry name" value="SNARE fusion complex"/>
    <property type="match status" value="1"/>
</dbReference>
<dbReference type="PROSITE" id="PS50192">
    <property type="entry name" value="T_SNARE"/>
    <property type="match status" value="1"/>
</dbReference>
<gene>
    <name type="primary">Stx8</name>
</gene>